<gene>
    <name type="primary">gtfI</name>
</gene>
<feature type="signal peptide" evidence="1">
    <location>
        <begin position="1"/>
        <end position="38"/>
    </location>
</feature>
<feature type="chain" id="PRO_0000021383" description="Glucosyltransferase-I">
    <location>
        <begin position="39"/>
        <end position="1597"/>
    </location>
</feature>
<feature type="repeat" description="Cell wall-binding 1">
    <location>
        <begin position="157"/>
        <end position="176"/>
    </location>
</feature>
<feature type="repeat" description="Cell wall-binding 2">
    <location>
        <begin position="178"/>
        <end position="197"/>
    </location>
</feature>
<feature type="repeat" description="Cell wall-binding 3">
    <location>
        <begin position="1089"/>
        <end position="1108"/>
    </location>
</feature>
<feature type="repeat" description="Cell wall-binding 4">
    <location>
        <begin position="1109"/>
        <end position="1128"/>
    </location>
</feature>
<feature type="repeat" description="Cell wall-binding 5">
    <location>
        <begin position="1130"/>
        <end position="1150"/>
    </location>
</feature>
<feature type="repeat" description="Cell wall-binding 6">
    <location>
        <begin position="1152"/>
        <end position="1172"/>
    </location>
</feature>
<feature type="repeat" description="Cell wall-binding 7">
    <location>
        <begin position="1173"/>
        <end position="1191"/>
    </location>
</feature>
<feature type="repeat" description="Cell wall-binding 8">
    <location>
        <begin position="1193"/>
        <end position="1214"/>
    </location>
</feature>
<feature type="repeat" description="Cell wall-binding 9">
    <location>
        <begin position="1216"/>
        <end position="1236"/>
    </location>
</feature>
<feature type="repeat" description="Cell wall-binding 10">
    <location>
        <begin position="1237"/>
        <end position="1256"/>
    </location>
</feature>
<feature type="repeat" description="Cell wall-binding 11">
    <location>
        <begin position="1258"/>
        <end position="1279"/>
    </location>
</feature>
<feature type="repeat" description="Cell wall-binding 12">
    <location>
        <begin position="1281"/>
        <end position="1301"/>
    </location>
</feature>
<feature type="repeat" description="Cell wall-binding 13">
    <location>
        <begin position="1302"/>
        <end position="1321"/>
    </location>
</feature>
<feature type="repeat" description="Cell wall-binding 14">
    <location>
        <begin position="1323"/>
        <end position="1343"/>
    </location>
</feature>
<feature type="repeat" description="Cell wall-binding 15">
    <location>
        <begin position="1344"/>
        <end position="1365"/>
    </location>
</feature>
<feature type="repeat" description="Cell wall-binding 16">
    <location>
        <begin position="1366"/>
        <end position="1380"/>
    </location>
</feature>
<feature type="repeat" description="Cell wall-binding 17">
    <location>
        <begin position="1415"/>
        <end position="1434"/>
    </location>
</feature>
<feature type="repeat" description="Cell wall-binding 18">
    <location>
        <begin position="1436"/>
        <end position="1457"/>
    </location>
</feature>
<feature type="repeat" description="Cell wall-binding 19">
    <location>
        <begin position="1459"/>
        <end position="1478"/>
    </location>
</feature>
<feature type="repeat" description="Cell wall-binding 20">
    <location>
        <begin position="1485"/>
        <end position="1505"/>
    </location>
</feature>
<feature type="repeat" description="Cell wall-binding 21">
    <location>
        <begin position="1508"/>
        <end position="1527"/>
    </location>
</feature>
<feature type="repeat" description="Cell wall-binding 22">
    <location>
        <begin position="1528"/>
        <end position="1547"/>
    </location>
</feature>
<feature type="repeat" description="Cell wall-binding 23">
    <location>
        <begin position="1549"/>
        <end position="1570"/>
    </location>
</feature>
<feature type="repeat" description="Cell wall-binding 24">
    <location>
        <begin position="1572"/>
        <end position="1591"/>
    </location>
</feature>
<feature type="region of interest" description="Disordered" evidence="2">
    <location>
        <begin position="52"/>
        <end position="120"/>
    </location>
</feature>
<feature type="region of interest" description="Catalytic; approximate">
    <location>
        <begin position="200"/>
        <end position="1050"/>
    </location>
</feature>
<feature type="region of interest" description="Glucan-binding; approximate">
    <location>
        <begin position="1099"/>
        <end position="1597"/>
    </location>
</feature>
<feature type="compositionally biased region" description="Low complexity" evidence="2">
    <location>
        <begin position="53"/>
        <end position="114"/>
    </location>
</feature>
<name>GTF1_STRDO</name>
<dbReference type="EC" id="2.4.1.5"/>
<dbReference type="EMBL" id="M17391">
    <property type="protein sequence ID" value="AAC63063.1"/>
    <property type="molecule type" value="Genomic_DNA"/>
</dbReference>
<dbReference type="SMR" id="P11001"/>
<dbReference type="CAZy" id="GH70">
    <property type="family name" value="Glycoside Hydrolase Family 70"/>
</dbReference>
<dbReference type="GO" id="GO:0005576">
    <property type="term" value="C:extracellular region"/>
    <property type="evidence" value="ECO:0007669"/>
    <property type="project" value="UniProtKB-SubCell"/>
</dbReference>
<dbReference type="GO" id="GO:0047849">
    <property type="term" value="F:dextransucrase activity"/>
    <property type="evidence" value="ECO:0007669"/>
    <property type="project" value="UniProtKB-EC"/>
</dbReference>
<dbReference type="GO" id="GO:0046527">
    <property type="term" value="F:glucosyltransferase activity"/>
    <property type="evidence" value="ECO:0007669"/>
    <property type="project" value="InterPro"/>
</dbReference>
<dbReference type="GO" id="GO:0009250">
    <property type="term" value="P:glucan biosynthetic process"/>
    <property type="evidence" value="ECO:0007669"/>
    <property type="project" value="InterPro"/>
</dbReference>
<dbReference type="Gene3D" id="2.30.30.20">
    <property type="entry name" value="Aspartate carbamoyltransferase regulatory subunit, C-terminal domain"/>
    <property type="match status" value="1"/>
</dbReference>
<dbReference type="Gene3D" id="2.10.270.10">
    <property type="entry name" value="Cholin Binding"/>
    <property type="match status" value="4"/>
</dbReference>
<dbReference type="Gene3D" id="3.20.20.470">
    <property type="entry name" value="Glucansucrase"/>
    <property type="match status" value="1"/>
</dbReference>
<dbReference type="Gene3D" id="2.30.30.420">
    <property type="entry name" value="glucansucrase"/>
    <property type="match status" value="1"/>
</dbReference>
<dbReference type="InterPro" id="IPR018337">
    <property type="entry name" value="Cell_wall/Cho-bd_repeat"/>
</dbReference>
<dbReference type="InterPro" id="IPR027636">
    <property type="entry name" value="Glucan-bd_rpt"/>
</dbReference>
<dbReference type="InterPro" id="IPR003318">
    <property type="entry name" value="Glyco_hydro70cat"/>
</dbReference>
<dbReference type="InterPro" id="IPR017853">
    <property type="entry name" value="Glycoside_hydrolase_SF"/>
</dbReference>
<dbReference type="InterPro" id="IPR022263">
    <property type="entry name" value="KxYKxGKxW"/>
</dbReference>
<dbReference type="NCBIfam" id="TIGR04035">
    <property type="entry name" value="glucan_65_rpt"/>
    <property type="match status" value="5"/>
</dbReference>
<dbReference type="NCBIfam" id="TIGR03715">
    <property type="entry name" value="KxYKxGKxW"/>
    <property type="match status" value="1"/>
</dbReference>
<dbReference type="Pfam" id="PF01473">
    <property type="entry name" value="Choline_bind_1"/>
    <property type="match status" value="3"/>
</dbReference>
<dbReference type="Pfam" id="PF19127">
    <property type="entry name" value="Choline_bind_3"/>
    <property type="match status" value="6"/>
</dbReference>
<dbReference type="Pfam" id="PF02324">
    <property type="entry name" value="Glyco_hydro_70"/>
    <property type="match status" value="1"/>
</dbReference>
<dbReference type="Pfam" id="PF19258">
    <property type="entry name" value="KxYKxGKxW_sig"/>
    <property type="match status" value="1"/>
</dbReference>
<dbReference type="SUPFAM" id="SSF51445">
    <property type="entry name" value="(Trans)glycosidases"/>
    <property type="match status" value="2"/>
</dbReference>
<dbReference type="SUPFAM" id="SSF69360">
    <property type="entry name" value="Cell wall binding repeat"/>
    <property type="match status" value="4"/>
</dbReference>
<dbReference type="PROSITE" id="PS51170">
    <property type="entry name" value="CW"/>
    <property type="match status" value="15"/>
</dbReference>
<protein>
    <recommendedName>
        <fullName>Glucosyltransferase-I</fullName>
        <shortName>GTF-I</shortName>
        <ecNumber>2.4.1.5</ecNumber>
    </recommendedName>
    <alternativeName>
        <fullName>Dextransucrase</fullName>
    </alternativeName>
    <alternativeName>
        <fullName>Sucrose 6-glucosyltransferase</fullName>
    </alternativeName>
</protein>
<evidence type="ECO:0000255" key="1"/>
<evidence type="ECO:0000256" key="2">
    <source>
        <dbReference type="SAM" id="MobiDB-lite"/>
    </source>
</evidence>
<evidence type="ECO:0000305" key="3"/>
<proteinExistence type="inferred from homology"/>
<reference key="1">
    <citation type="journal article" date="1987" name="J. Bacteriol.">
        <title>Nucleotide sequence of a glucosyltransferase gene from Streptococcus sobrinus MFe28.</title>
        <authorList>
            <person name="Ferretti J.J."/>
            <person name="Gilpin M.L."/>
            <person name="Russell R.R.B."/>
        </authorList>
    </citation>
    <scope>NUCLEOTIDE SEQUENCE [GENOMIC DNA]</scope>
    <source>
        <strain>MFE28</strain>
    </source>
</reference>
<keyword id="KW-0214">Dental caries</keyword>
<keyword id="KW-0328">Glycosyltransferase</keyword>
<keyword id="KW-0677">Repeat</keyword>
<keyword id="KW-0964">Secreted</keyword>
<keyword id="KW-0732">Signal</keyword>
<keyword id="KW-0808">Transferase</keyword>
<sequence length="1597" mass="177080">MEKNERFKMHKVKKRWVTISVASATMLASALGASVASADTETVSEDSNQAVLTADQTTTNQDTEQTSVAATATSEQSASTDAATDQASATDQASAAEQTQGTTASTDTAAQTTTNANEAKWVPTENENQVFTDEMLAEAKNVATAESNSIPSDLAKMSNVKQVDGKYYYYDQDGNVKKNFAVSVGEKIYYFDETGAYKDTSKVEADKSGSDISKEETTFAANNRAYSTSAENFEAIDNYLTADSWYRPKSILKDGKTWTESSKDDFRPLLMAWWPDTETKRNYVNYMNKVVGIDKTYTAETSQADLTAAAELVQARIEQKITTEQNTKWLREAISAFVKTQPQWNGESEKPYDDHLQNGALKFDNQSDLTPDTQSNYRLLNRTPTNQTGSLDSRFTYNANDPLGGYELLLANDVDNSNPIVQAEQLNWLHYLLNFGTIYAKDADANFDSIRVDAVDNVDADLLQISSDYLKAAYGIDKNNKNANNHVSIVEAWSDNDTPYLHDDGDNLMNMDNKFRLSMLWSLAKPLDKRSGLNPLIHNSLVDREVDDREVETVPSYSFARAHDSEVQDLIRDIIKAEINPNAFGYSFTQDEIDQAFKIYNEDLKKTDKKYTHYNVPLSYTLLLTNKGSIPRVYYGDMFTDDGQYMANKTVNYDAIESLLKARMKYVAGGQAMQNYQIGNGEILTSVRYGKGALKQSDKGDATTRTSGVGVVMGNQPNFSLDGKVVALNMGAAHANQEYRALMVSTKDGVATYATDADASKAGLVKRTDENGYLYFLNDDLKGVANPQVSGFLQVWVPVGAADDQDIRVAASDTASTDGKSLHQDAAMDSRVMFEGFSNFQSFATKEEEYTNVVIANNVDKFVSWGITDFEMAPQYVSSTDGQFLDSVIQNGYAFTDRYDLGMSKANKYGTADQLVKAIKALHAKGLKVMADWVPDQMYTFPKQEVVTVTRTDKFGKPIAGSQINHSLYVTDTKSSGDDYQAKYGGAFLDELKEKYPELFTKKQISTGQAIDPSVKIKQWSAKYFNGSNILGRGADYVLSDQASNKYLNVSDDKLFLPKTLLGQVVESGIRFDGTGYVYNSSTTGEKVTDSFITEAGNLYYFGQDGYMVTGAQNIKGSNYYFLANGAALRNTVYTDAQGQNHYYGNDGKRYENGYQQFGNDSWRYFKNGVMALGLTTVDGHVQYFDKDGVQAKDKIIVTRDGKVRYFDQHNGNAVTNTFVADKTGHWYYLGKDGVAVTGAQTVGKQHLYFEANGQQVKGDFVTAKDGKLYFYDVDSGDMWTNTFIEDKAGNWFYLGKDGAAVTGAQTIKGQKLYFKANGQQVKGDIVKDADGKIRYYDAQTGEQVFNKSVSVNGKTYYFGSDGTAQTQANPKGQTFKDGSGVLRFYNLEGQYVSGSGWYETAEHEWVYVKSGKVLTGAQTIGNQRVYFKDNGHQVKGQLVTGNDGKLRYYDANSGDQAFNKSVTVNGKTYYFGSDGTAQTQANPKGQTFKDGSGVLRFYNLEGQYVSGSGWYKNAQGQWLYVKDGKVLTGLQTVGNQKVYFDKNGIQAKGKAVRTSDGKVRYFDENSGSMITNQWKFVYGQYYYFGSDGAAVYRGWN</sequence>
<comment type="function">
    <text>Production of extracellular glucans, that are thought to play a key role in the development of the dental plaque because of their ability to adhere to smooth surfaces and mediate the aggregation of bacterial cells and food debris.</text>
</comment>
<comment type="catalytic activity">
    <reaction>
        <text>[(1-&gt;6)-alpha-D-glucosyl](n) + sucrose = [(1-&gt;6)-alpha-D-glucosyl](n+1) + D-fructose</text>
        <dbReference type="Rhea" id="RHEA:18825"/>
        <dbReference type="Rhea" id="RHEA-COMP:11144"/>
        <dbReference type="Rhea" id="RHEA-COMP:11145"/>
        <dbReference type="ChEBI" id="CHEBI:17992"/>
        <dbReference type="ChEBI" id="CHEBI:18269"/>
        <dbReference type="ChEBI" id="CHEBI:37721"/>
        <dbReference type="EC" id="2.4.1.5"/>
    </reaction>
</comment>
<comment type="subcellular location">
    <subcellularLocation>
        <location>Secreted</location>
    </subcellularLocation>
</comment>
<comment type="miscellaneous">
    <text>GTF-I synthesizes water-insoluble glucans (alpha 1,3-linked glucose and some 1,6 linkages), GTF-S synthesizes water-soluble glucans (alpha 1,6-glucose). GTF-SI synthesizes both forms of glucans.</text>
</comment>
<comment type="similarity">
    <text evidence="3">Belongs to the glycosyl hydrolase 70 family.</text>
</comment>
<organism>
    <name type="scientific">Streptococcus downei</name>
    <name type="common">Streptococcus sobrinus</name>
    <dbReference type="NCBI Taxonomy" id="1317"/>
    <lineage>
        <taxon>Bacteria</taxon>
        <taxon>Bacillati</taxon>
        <taxon>Bacillota</taxon>
        <taxon>Bacilli</taxon>
        <taxon>Lactobacillales</taxon>
        <taxon>Streptococcaceae</taxon>
        <taxon>Streptococcus</taxon>
    </lineage>
</organism>
<accession>P11001</accession>